<proteinExistence type="evidence at protein level"/>
<organism>
    <name type="scientific">Homo sapiens</name>
    <name type="common">Human</name>
    <dbReference type="NCBI Taxonomy" id="9606"/>
    <lineage>
        <taxon>Eukaryota</taxon>
        <taxon>Metazoa</taxon>
        <taxon>Chordata</taxon>
        <taxon>Craniata</taxon>
        <taxon>Vertebrata</taxon>
        <taxon>Euteleostomi</taxon>
        <taxon>Mammalia</taxon>
        <taxon>Eutheria</taxon>
        <taxon>Euarchontoglires</taxon>
        <taxon>Primates</taxon>
        <taxon>Haplorrhini</taxon>
        <taxon>Catarrhini</taxon>
        <taxon>Hominidae</taxon>
        <taxon>Homo</taxon>
    </lineage>
</organism>
<accession>Q9NVZ3</accession>
<accession>B4DY19</accession>
<accession>E9PGQ8</accession>
<accession>Q5VSU4</accession>
<accession>Q5VSU5</accession>
<accession>Q9H7L1</accession>
<accession>Q9H8L1</accession>
<comment type="function">
    <text evidence="1">Involved in endocytosis.</text>
</comment>
<comment type="subunit">
    <text evidence="1">Interacts with AP1G1 and AP2A1 components of the adapter protein complexes AP-1 and AP-2. Interacts with the GAE domain proteins GGA1, GGA2 and GGA3 (By similarity).</text>
</comment>
<comment type="interaction">
    <interactant intactId="EBI-742525">
        <id>Q9NVZ3</id>
    </interactant>
    <interactant intactId="EBI-432924">
        <id>P63010</id>
        <label>AP2B1</label>
    </interactant>
    <organismsDiffer>false</organismsDiffer>
    <experiments>4</experiments>
</comment>
<comment type="subcellular location">
    <subcellularLocation>
        <location evidence="1">Cytoplasmic vesicle</location>
        <location evidence="1">Clathrin-coated vesicle membrane</location>
    </subcellularLocation>
    <subcellularLocation>
        <location evidence="1">Cell membrane</location>
    </subcellularLocation>
    <text evidence="1">Colocalizes with AP-2 at the plasma membrane.</text>
</comment>
<comment type="alternative products">
    <event type="alternative splicing"/>
    <isoform>
        <id>Q9NVZ3-1</id>
        <name>1</name>
        <sequence type="displayed"/>
    </isoform>
    <isoform>
        <id>Q9NVZ3-2</id>
        <name>2</name>
        <sequence type="described" ref="VSP_013236"/>
    </isoform>
    <isoform>
        <id>Q9NVZ3-3</id>
        <name>3</name>
        <sequence type="described" ref="VSP_013234 VSP_013235"/>
    </isoform>
    <isoform>
        <id>Q9NVZ3-4</id>
        <name>4</name>
        <sequence type="described" ref="VSP_041726"/>
    </isoform>
</comment>
<comment type="domain">
    <text evidence="1">The WXXF motifs mediate binding of accessory proteins to the ear-domain of AP-1, GGAs and AP-2 through hydrophobic interactions. Selective binding to the GAE domains of AP-1 or to the alpha-ear domain of AP-2 is tuned by the acidic context surrounding the motif and the properties of the second residue of the motif itself (By similarity).</text>
</comment>
<comment type="similarity">
    <text evidence="5">Belongs to the NECAP family.</text>
</comment>
<comment type="sequence caution" evidence="5">
    <conflict type="erroneous initiation">
        <sequence resource="EMBL-CDS" id="BAB15758"/>
    </conflict>
    <text>Extended N-terminus.</text>
</comment>
<evidence type="ECO:0000250" key="1"/>
<evidence type="ECO:0000256" key="2">
    <source>
        <dbReference type="SAM" id="MobiDB-lite"/>
    </source>
</evidence>
<evidence type="ECO:0000303" key="3">
    <source>
    </source>
</evidence>
<evidence type="ECO:0000303" key="4">
    <source>
    </source>
</evidence>
<evidence type="ECO:0000305" key="5"/>
<evidence type="ECO:0007744" key="6">
    <source>
    </source>
</evidence>
<protein>
    <recommendedName>
        <fullName>Adaptin ear-binding coat-associated protein 2</fullName>
    </recommendedName>
    <alternativeName>
        <fullName>NECAP endocytosis-associated protein 2</fullName>
        <shortName>NECAP-2</shortName>
    </alternativeName>
</protein>
<dbReference type="EMBL" id="AK024468">
    <property type="protein sequence ID" value="BAB15758.1"/>
    <property type="status" value="ALT_INIT"/>
    <property type="molecule type" value="mRNA"/>
</dbReference>
<dbReference type="EMBL" id="AK302227">
    <property type="protein sequence ID" value="BAG63581.1"/>
    <property type="molecule type" value="mRNA"/>
</dbReference>
<dbReference type="EMBL" id="AK001282">
    <property type="protein sequence ID" value="BAA91598.1"/>
    <property type="molecule type" value="mRNA"/>
</dbReference>
<dbReference type="EMBL" id="AK023545">
    <property type="protein sequence ID" value="BAB14605.1"/>
    <property type="molecule type" value="mRNA"/>
</dbReference>
<dbReference type="EMBL" id="AL137802">
    <property type="status" value="NOT_ANNOTATED_CDS"/>
    <property type="molecule type" value="Genomic_DNA"/>
</dbReference>
<dbReference type="EMBL" id="AL669962">
    <property type="status" value="NOT_ANNOTATED_CDS"/>
    <property type="molecule type" value="Genomic_DNA"/>
</dbReference>
<dbReference type="EMBL" id="BC017014">
    <property type="protein sequence ID" value="AAH17014.1"/>
    <property type="molecule type" value="mRNA"/>
</dbReference>
<dbReference type="EMBL" id="BC018914">
    <property type="protein sequence ID" value="AAH18914.1"/>
    <property type="molecule type" value="mRNA"/>
</dbReference>
<dbReference type="CCDS" id="CCDS173.1">
    <molecule id="Q9NVZ3-1"/>
</dbReference>
<dbReference type="CCDS" id="CCDS44066.1">
    <molecule id="Q9NVZ3-2"/>
</dbReference>
<dbReference type="CCDS" id="CCDS44067.1">
    <molecule id="Q9NVZ3-4"/>
</dbReference>
<dbReference type="RefSeq" id="NP_001138749.1">
    <molecule id="Q9NVZ3-2"/>
    <property type="nucleotide sequence ID" value="NM_001145277.2"/>
</dbReference>
<dbReference type="RefSeq" id="NP_001138750.1">
    <molecule id="Q9NVZ3-4"/>
    <property type="nucleotide sequence ID" value="NM_001145278.2"/>
</dbReference>
<dbReference type="RefSeq" id="NP_060560.1">
    <molecule id="Q9NVZ3-1"/>
    <property type="nucleotide sequence ID" value="NM_018090.5"/>
</dbReference>
<dbReference type="SMR" id="Q9NVZ3"/>
<dbReference type="BioGRID" id="120832">
    <property type="interactions" value="66"/>
</dbReference>
<dbReference type="FunCoup" id="Q9NVZ3">
    <property type="interactions" value="2236"/>
</dbReference>
<dbReference type="IntAct" id="Q9NVZ3">
    <property type="interactions" value="44"/>
</dbReference>
<dbReference type="STRING" id="9606.ENSP00000391942"/>
<dbReference type="GlyGen" id="Q9NVZ3">
    <property type="glycosylation" value="1 site, 1 O-linked glycan (1 site)"/>
</dbReference>
<dbReference type="iPTMnet" id="Q9NVZ3"/>
<dbReference type="MetOSite" id="Q9NVZ3"/>
<dbReference type="PhosphoSitePlus" id="Q9NVZ3"/>
<dbReference type="BioMuta" id="NECAP2"/>
<dbReference type="DMDM" id="62287168"/>
<dbReference type="jPOST" id="Q9NVZ3"/>
<dbReference type="MassIVE" id="Q9NVZ3"/>
<dbReference type="PaxDb" id="9606-ENSP00000391942"/>
<dbReference type="PeptideAtlas" id="Q9NVZ3"/>
<dbReference type="ProteomicsDB" id="82880">
    <molecule id="Q9NVZ3-1"/>
</dbReference>
<dbReference type="ProteomicsDB" id="82881">
    <molecule id="Q9NVZ3-2"/>
</dbReference>
<dbReference type="ProteomicsDB" id="82882">
    <molecule id="Q9NVZ3-3"/>
</dbReference>
<dbReference type="ProteomicsDB" id="82883">
    <molecule id="Q9NVZ3-4"/>
</dbReference>
<dbReference type="Pumba" id="Q9NVZ3"/>
<dbReference type="Antibodypedia" id="29202">
    <property type="antibodies" value="60 antibodies from 22 providers"/>
</dbReference>
<dbReference type="DNASU" id="55707"/>
<dbReference type="Ensembl" id="ENST00000337132.10">
    <molecule id="Q9NVZ3-1"/>
    <property type="protein sequence ID" value="ENSP00000338746.5"/>
    <property type="gene ID" value="ENSG00000157191.20"/>
</dbReference>
<dbReference type="Ensembl" id="ENST00000443980.6">
    <molecule id="Q9NVZ3-2"/>
    <property type="protein sequence ID" value="ENSP00000391942.2"/>
    <property type="gene ID" value="ENSG00000157191.20"/>
</dbReference>
<dbReference type="Ensembl" id="ENST00000457722.6">
    <molecule id="Q9NVZ3-4"/>
    <property type="protein sequence ID" value="ENSP00000407091.2"/>
    <property type="gene ID" value="ENSG00000157191.20"/>
</dbReference>
<dbReference type="Ensembl" id="ENST00000492095.5">
    <molecule id="Q9NVZ3-1"/>
    <property type="protein sequence ID" value="ENSP00000427620.1"/>
    <property type="gene ID" value="ENSG00000157191.20"/>
</dbReference>
<dbReference type="Ensembl" id="ENST00000707372.1">
    <molecule id="Q9NVZ3-1"/>
    <property type="protein sequence ID" value="ENSP00000516847.1"/>
    <property type="gene ID" value="ENSG00000291380.1"/>
</dbReference>
<dbReference type="Ensembl" id="ENST00000707374.1">
    <molecule id="Q9NVZ3-4"/>
    <property type="protein sequence ID" value="ENSP00000516849.1"/>
    <property type="gene ID" value="ENSG00000291380.1"/>
</dbReference>
<dbReference type="Ensembl" id="ENST00000707376.1">
    <molecule id="Q9NVZ3-2"/>
    <property type="protein sequence ID" value="ENSP00000516850.1"/>
    <property type="gene ID" value="ENSG00000291380.1"/>
</dbReference>
<dbReference type="Ensembl" id="ENST00000707379.1">
    <molecule id="Q9NVZ3-1"/>
    <property type="protein sequence ID" value="ENSP00000516852.1"/>
    <property type="gene ID" value="ENSG00000291380.1"/>
</dbReference>
<dbReference type="GeneID" id="55707"/>
<dbReference type="KEGG" id="hsa:55707"/>
<dbReference type="MANE-Select" id="ENST00000337132.10">
    <property type="protein sequence ID" value="ENSP00000338746.5"/>
    <property type="RefSeq nucleotide sequence ID" value="NM_018090.5"/>
    <property type="RefSeq protein sequence ID" value="NP_060560.1"/>
</dbReference>
<dbReference type="UCSC" id="uc001ayo.4">
    <molecule id="Q9NVZ3-1"/>
    <property type="organism name" value="human"/>
</dbReference>
<dbReference type="AGR" id="HGNC:25528"/>
<dbReference type="CTD" id="55707"/>
<dbReference type="DisGeNET" id="55707"/>
<dbReference type="GeneCards" id="NECAP2"/>
<dbReference type="HGNC" id="HGNC:25528">
    <property type="gene designation" value="NECAP2"/>
</dbReference>
<dbReference type="HPA" id="ENSG00000157191">
    <property type="expression patterns" value="Low tissue specificity"/>
</dbReference>
<dbReference type="MalaCards" id="NECAP2"/>
<dbReference type="MIM" id="611624">
    <property type="type" value="gene"/>
</dbReference>
<dbReference type="neXtProt" id="NX_Q9NVZ3"/>
<dbReference type="OpenTargets" id="ENSG00000157191"/>
<dbReference type="PharmGKB" id="PA142671268"/>
<dbReference type="VEuPathDB" id="HostDB:ENSG00000157191"/>
<dbReference type="eggNOG" id="KOG2500">
    <property type="taxonomic scope" value="Eukaryota"/>
</dbReference>
<dbReference type="GeneTree" id="ENSGT00390000009359"/>
<dbReference type="HOGENOM" id="CLU_069884_1_0_1"/>
<dbReference type="InParanoid" id="Q9NVZ3"/>
<dbReference type="OMA" id="NEGHRAQ"/>
<dbReference type="OrthoDB" id="10265489at2759"/>
<dbReference type="PAN-GO" id="Q9NVZ3">
    <property type="GO annotations" value="2 GO annotations based on evolutionary models"/>
</dbReference>
<dbReference type="PhylomeDB" id="Q9NVZ3"/>
<dbReference type="TreeFam" id="TF314482"/>
<dbReference type="PathwayCommons" id="Q9NVZ3"/>
<dbReference type="Reactome" id="R-HSA-8856825">
    <property type="pathway name" value="Cargo recognition for clathrin-mediated endocytosis"/>
</dbReference>
<dbReference type="Reactome" id="R-HSA-8856828">
    <property type="pathway name" value="Clathrin-mediated endocytosis"/>
</dbReference>
<dbReference type="SignaLink" id="Q9NVZ3"/>
<dbReference type="BioGRID-ORCS" id="55707">
    <property type="hits" value="8 hits in 1152 CRISPR screens"/>
</dbReference>
<dbReference type="ChiTaRS" id="NECAP2">
    <property type="organism name" value="human"/>
</dbReference>
<dbReference type="GeneWiki" id="NECAP2"/>
<dbReference type="GenomeRNAi" id="55707"/>
<dbReference type="Pharos" id="Q9NVZ3">
    <property type="development level" value="Tdark"/>
</dbReference>
<dbReference type="PRO" id="PR:Q9NVZ3"/>
<dbReference type="Proteomes" id="UP000005640">
    <property type="component" value="Chromosome 1"/>
</dbReference>
<dbReference type="RNAct" id="Q9NVZ3">
    <property type="molecule type" value="protein"/>
</dbReference>
<dbReference type="Bgee" id="ENSG00000157191">
    <property type="expression patterns" value="Expressed in oocyte and 179 other cell types or tissues"/>
</dbReference>
<dbReference type="ExpressionAtlas" id="Q9NVZ3">
    <property type="expression patterns" value="baseline and differential"/>
</dbReference>
<dbReference type="GO" id="GO:0030125">
    <property type="term" value="C:clathrin vesicle coat"/>
    <property type="evidence" value="ECO:0000250"/>
    <property type="project" value="UniProtKB"/>
</dbReference>
<dbReference type="GO" id="GO:0005905">
    <property type="term" value="C:clathrin-coated pit"/>
    <property type="evidence" value="ECO:0000250"/>
    <property type="project" value="UniProtKB"/>
</dbReference>
<dbReference type="GO" id="GO:0005886">
    <property type="term" value="C:plasma membrane"/>
    <property type="evidence" value="ECO:0007669"/>
    <property type="project" value="UniProtKB-SubCell"/>
</dbReference>
<dbReference type="GO" id="GO:0006897">
    <property type="term" value="P:endocytosis"/>
    <property type="evidence" value="ECO:0000250"/>
    <property type="project" value="UniProtKB"/>
</dbReference>
<dbReference type="GO" id="GO:0015031">
    <property type="term" value="P:protein transport"/>
    <property type="evidence" value="ECO:0007669"/>
    <property type="project" value="UniProtKB-KW"/>
</dbReference>
<dbReference type="GO" id="GO:0016192">
    <property type="term" value="P:vesicle-mediated transport"/>
    <property type="evidence" value="ECO:0000318"/>
    <property type="project" value="GO_Central"/>
</dbReference>
<dbReference type="CDD" id="cd13228">
    <property type="entry name" value="PHear_NECAP"/>
    <property type="match status" value="1"/>
</dbReference>
<dbReference type="FunFam" id="2.30.29.30:FF:000064">
    <property type="entry name" value="Adaptin ear-binding coat-associated protein 1"/>
    <property type="match status" value="1"/>
</dbReference>
<dbReference type="Gene3D" id="2.30.29.30">
    <property type="entry name" value="Pleckstrin-homology domain (PH domain)/Phosphotyrosine-binding domain (PTB)"/>
    <property type="match status" value="1"/>
</dbReference>
<dbReference type="InterPro" id="IPR012466">
    <property type="entry name" value="NECAP_PHear"/>
</dbReference>
<dbReference type="InterPro" id="IPR011993">
    <property type="entry name" value="PH-like_dom_sf"/>
</dbReference>
<dbReference type="PANTHER" id="PTHR12847:SF16">
    <property type="entry name" value="ADAPTIN EAR-BINDING COAT-ASSOCIATED PROTEIN 2"/>
    <property type="match status" value="1"/>
</dbReference>
<dbReference type="PANTHER" id="PTHR12847">
    <property type="entry name" value="ATP-BINDING CASSETTE ABC TRANSPORTER-RELATED"/>
    <property type="match status" value="1"/>
</dbReference>
<dbReference type="Pfam" id="PF07933">
    <property type="entry name" value="DUF1681"/>
    <property type="match status" value="1"/>
</dbReference>
<dbReference type="SUPFAM" id="SSF50729">
    <property type="entry name" value="PH domain-like"/>
    <property type="match status" value="1"/>
</dbReference>
<keyword id="KW-0025">Alternative splicing</keyword>
<keyword id="KW-1003">Cell membrane</keyword>
<keyword id="KW-0968">Cytoplasmic vesicle</keyword>
<keyword id="KW-0254">Endocytosis</keyword>
<keyword id="KW-0472">Membrane</keyword>
<keyword id="KW-0597">Phosphoprotein</keyword>
<keyword id="KW-0653">Protein transport</keyword>
<keyword id="KW-1267">Proteomics identification</keyword>
<keyword id="KW-1185">Reference proteome</keyword>
<keyword id="KW-0677">Repeat</keyword>
<keyword id="KW-0813">Transport</keyword>
<reference key="1">
    <citation type="journal article" date="2000" name="DNA Res.">
        <title>Characterization of long cDNA clones from human adult spleen.</title>
        <authorList>
            <person name="Hattori A."/>
            <person name="Okumura K."/>
            <person name="Nagase T."/>
            <person name="Kikuno R."/>
            <person name="Hirosawa M."/>
            <person name="Ohara O."/>
        </authorList>
    </citation>
    <scope>NUCLEOTIDE SEQUENCE [LARGE SCALE MRNA] (ISOFORM 3)</scope>
    <source>
        <tissue>Spleen</tissue>
    </source>
</reference>
<reference key="2">
    <citation type="journal article" date="2004" name="Nat. Genet.">
        <title>Complete sequencing and characterization of 21,243 full-length human cDNAs.</title>
        <authorList>
            <person name="Ota T."/>
            <person name="Suzuki Y."/>
            <person name="Nishikawa T."/>
            <person name="Otsuki T."/>
            <person name="Sugiyama T."/>
            <person name="Irie R."/>
            <person name="Wakamatsu A."/>
            <person name="Hayashi K."/>
            <person name="Sato H."/>
            <person name="Nagai K."/>
            <person name="Kimura K."/>
            <person name="Makita H."/>
            <person name="Sekine M."/>
            <person name="Obayashi M."/>
            <person name="Nishi T."/>
            <person name="Shibahara T."/>
            <person name="Tanaka T."/>
            <person name="Ishii S."/>
            <person name="Yamamoto J."/>
            <person name="Saito K."/>
            <person name="Kawai Y."/>
            <person name="Isono Y."/>
            <person name="Nakamura Y."/>
            <person name="Nagahari K."/>
            <person name="Murakami K."/>
            <person name="Yasuda T."/>
            <person name="Iwayanagi T."/>
            <person name="Wagatsuma M."/>
            <person name="Shiratori A."/>
            <person name="Sudo H."/>
            <person name="Hosoiri T."/>
            <person name="Kaku Y."/>
            <person name="Kodaira H."/>
            <person name="Kondo H."/>
            <person name="Sugawara M."/>
            <person name="Takahashi M."/>
            <person name="Kanda K."/>
            <person name="Yokoi T."/>
            <person name="Furuya T."/>
            <person name="Kikkawa E."/>
            <person name="Omura Y."/>
            <person name="Abe K."/>
            <person name="Kamihara K."/>
            <person name="Katsuta N."/>
            <person name="Sato K."/>
            <person name="Tanikawa M."/>
            <person name="Yamazaki M."/>
            <person name="Ninomiya K."/>
            <person name="Ishibashi T."/>
            <person name="Yamashita H."/>
            <person name="Murakawa K."/>
            <person name="Fujimori K."/>
            <person name="Tanai H."/>
            <person name="Kimata M."/>
            <person name="Watanabe M."/>
            <person name="Hiraoka S."/>
            <person name="Chiba Y."/>
            <person name="Ishida S."/>
            <person name="Ono Y."/>
            <person name="Takiguchi S."/>
            <person name="Watanabe S."/>
            <person name="Yosida M."/>
            <person name="Hotuta T."/>
            <person name="Kusano J."/>
            <person name="Kanehori K."/>
            <person name="Takahashi-Fujii A."/>
            <person name="Hara H."/>
            <person name="Tanase T.-O."/>
            <person name="Nomura Y."/>
            <person name="Togiya S."/>
            <person name="Komai F."/>
            <person name="Hara R."/>
            <person name="Takeuchi K."/>
            <person name="Arita M."/>
            <person name="Imose N."/>
            <person name="Musashino K."/>
            <person name="Yuuki H."/>
            <person name="Oshima A."/>
            <person name="Sasaki N."/>
            <person name="Aotsuka S."/>
            <person name="Yoshikawa Y."/>
            <person name="Matsunawa H."/>
            <person name="Ichihara T."/>
            <person name="Shiohata N."/>
            <person name="Sano S."/>
            <person name="Moriya S."/>
            <person name="Momiyama H."/>
            <person name="Satoh N."/>
            <person name="Takami S."/>
            <person name="Terashima Y."/>
            <person name="Suzuki O."/>
            <person name="Nakagawa S."/>
            <person name="Senoh A."/>
            <person name="Mizoguchi H."/>
            <person name="Goto Y."/>
            <person name="Shimizu F."/>
            <person name="Wakebe H."/>
            <person name="Hishigaki H."/>
            <person name="Watanabe T."/>
            <person name="Sugiyama A."/>
            <person name="Takemoto M."/>
            <person name="Kawakami B."/>
            <person name="Yamazaki M."/>
            <person name="Watanabe K."/>
            <person name="Kumagai A."/>
            <person name="Itakura S."/>
            <person name="Fukuzumi Y."/>
            <person name="Fujimori Y."/>
            <person name="Komiyama M."/>
            <person name="Tashiro H."/>
            <person name="Tanigami A."/>
            <person name="Fujiwara T."/>
            <person name="Ono T."/>
            <person name="Yamada K."/>
            <person name="Fujii Y."/>
            <person name="Ozaki K."/>
            <person name="Hirao M."/>
            <person name="Ohmori Y."/>
            <person name="Kawabata A."/>
            <person name="Hikiji T."/>
            <person name="Kobatake N."/>
            <person name="Inagaki H."/>
            <person name="Ikema Y."/>
            <person name="Okamoto S."/>
            <person name="Okitani R."/>
            <person name="Kawakami T."/>
            <person name="Noguchi S."/>
            <person name="Itoh T."/>
            <person name="Shigeta K."/>
            <person name="Senba T."/>
            <person name="Matsumura K."/>
            <person name="Nakajima Y."/>
            <person name="Mizuno T."/>
            <person name="Morinaga M."/>
            <person name="Sasaki M."/>
            <person name="Togashi T."/>
            <person name="Oyama M."/>
            <person name="Hata H."/>
            <person name="Watanabe M."/>
            <person name="Komatsu T."/>
            <person name="Mizushima-Sugano J."/>
            <person name="Satoh T."/>
            <person name="Shirai Y."/>
            <person name="Takahashi Y."/>
            <person name="Nakagawa K."/>
            <person name="Okumura K."/>
            <person name="Nagase T."/>
            <person name="Nomura N."/>
            <person name="Kikuchi H."/>
            <person name="Masuho Y."/>
            <person name="Yamashita R."/>
            <person name="Nakai K."/>
            <person name="Yada T."/>
            <person name="Nakamura Y."/>
            <person name="Ohara O."/>
            <person name="Isogai T."/>
            <person name="Sugano S."/>
        </authorList>
    </citation>
    <scope>NUCLEOTIDE SEQUENCE [LARGE SCALE MRNA] (ISOFORMS 1; 2 AND 4)</scope>
    <source>
        <tissue>Placenta</tissue>
        <tissue>Spleen</tissue>
        <tissue>Testis</tissue>
    </source>
</reference>
<reference key="3">
    <citation type="journal article" date="2006" name="Nature">
        <title>The DNA sequence and biological annotation of human chromosome 1.</title>
        <authorList>
            <person name="Gregory S.G."/>
            <person name="Barlow K.F."/>
            <person name="McLay K.E."/>
            <person name="Kaul R."/>
            <person name="Swarbreck D."/>
            <person name="Dunham A."/>
            <person name="Scott C.E."/>
            <person name="Howe K.L."/>
            <person name="Woodfine K."/>
            <person name="Spencer C.C.A."/>
            <person name="Jones M.C."/>
            <person name="Gillson C."/>
            <person name="Searle S."/>
            <person name="Zhou Y."/>
            <person name="Kokocinski F."/>
            <person name="McDonald L."/>
            <person name="Evans R."/>
            <person name="Phillips K."/>
            <person name="Atkinson A."/>
            <person name="Cooper R."/>
            <person name="Jones C."/>
            <person name="Hall R.E."/>
            <person name="Andrews T.D."/>
            <person name="Lloyd C."/>
            <person name="Ainscough R."/>
            <person name="Almeida J.P."/>
            <person name="Ambrose K.D."/>
            <person name="Anderson F."/>
            <person name="Andrew R.W."/>
            <person name="Ashwell R.I.S."/>
            <person name="Aubin K."/>
            <person name="Babbage A.K."/>
            <person name="Bagguley C.L."/>
            <person name="Bailey J."/>
            <person name="Beasley H."/>
            <person name="Bethel G."/>
            <person name="Bird C.P."/>
            <person name="Bray-Allen S."/>
            <person name="Brown J.Y."/>
            <person name="Brown A.J."/>
            <person name="Buckley D."/>
            <person name="Burton J."/>
            <person name="Bye J."/>
            <person name="Carder C."/>
            <person name="Chapman J.C."/>
            <person name="Clark S.Y."/>
            <person name="Clarke G."/>
            <person name="Clee C."/>
            <person name="Cobley V."/>
            <person name="Collier R.E."/>
            <person name="Corby N."/>
            <person name="Coville G.J."/>
            <person name="Davies J."/>
            <person name="Deadman R."/>
            <person name="Dunn M."/>
            <person name="Earthrowl M."/>
            <person name="Ellington A.G."/>
            <person name="Errington H."/>
            <person name="Frankish A."/>
            <person name="Frankland J."/>
            <person name="French L."/>
            <person name="Garner P."/>
            <person name="Garnett J."/>
            <person name="Gay L."/>
            <person name="Ghori M.R.J."/>
            <person name="Gibson R."/>
            <person name="Gilby L.M."/>
            <person name="Gillett W."/>
            <person name="Glithero R.J."/>
            <person name="Grafham D.V."/>
            <person name="Griffiths C."/>
            <person name="Griffiths-Jones S."/>
            <person name="Grocock R."/>
            <person name="Hammond S."/>
            <person name="Harrison E.S.I."/>
            <person name="Hart E."/>
            <person name="Haugen E."/>
            <person name="Heath P.D."/>
            <person name="Holmes S."/>
            <person name="Holt K."/>
            <person name="Howden P.J."/>
            <person name="Hunt A.R."/>
            <person name="Hunt S.E."/>
            <person name="Hunter G."/>
            <person name="Isherwood J."/>
            <person name="James R."/>
            <person name="Johnson C."/>
            <person name="Johnson D."/>
            <person name="Joy A."/>
            <person name="Kay M."/>
            <person name="Kershaw J.K."/>
            <person name="Kibukawa M."/>
            <person name="Kimberley A.M."/>
            <person name="King A."/>
            <person name="Knights A.J."/>
            <person name="Lad H."/>
            <person name="Laird G."/>
            <person name="Lawlor S."/>
            <person name="Leongamornlert D.A."/>
            <person name="Lloyd D.M."/>
            <person name="Loveland J."/>
            <person name="Lovell J."/>
            <person name="Lush M.J."/>
            <person name="Lyne R."/>
            <person name="Martin S."/>
            <person name="Mashreghi-Mohammadi M."/>
            <person name="Matthews L."/>
            <person name="Matthews N.S.W."/>
            <person name="McLaren S."/>
            <person name="Milne S."/>
            <person name="Mistry S."/>
            <person name="Moore M.J.F."/>
            <person name="Nickerson T."/>
            <person name="O'Dell C.N."/>
            <person name="Oliver K."/>
            <person name="Palmeiri A."/>
            <person name="Palmer S.A."/>
            <person name="Parker A."/>
            <person name="Patel D."/>
            <person name="Pearce A.V."/>
            <person name="Peck A.I."/>
            <person name="Pelan S."/>
            <person name="Phelps K."/>
            <person name="Phillimore B.J."/>
            <person name="Plumb R."/>
            <person name="Rajan J."/>
            <person name="Raymond C."/>
            <person name="Rouse G."/>
            <person name="Saenphimmachak C."/>
            <person name="Sehra H.K."/>
            <person name="Sheridan E."/>
            <person name="Shownkeen R."/>
            <person name="Sims S."/>
            <person name="Skuce C.D."/>
            <person name="Smith M."/>
            <person name="Steward C."/>
            <person name="Subramanian S."/>
            <person name="Sycamore N."/>
            <person name="Tracey A."/>
            <person name="Tromans A."/>
            <person name="Van Helmond Z."/>
            <person name="Wall M."/>
            <person name="Wallis J.M."/>
            <person name="White S."/>
            <person name="Whitehead S.L."/>
            <person name="Wilkinson J.E."/>
            <person name="Willey D.L."/>
            <person name="Williams H."/>
            <person name="Wilming L."/>
            <person name="Wray P.W."/>
            <person name="Wu Z."/>
            <person name="Coulson A."/>
            <person name="Vaudin M."/>
            <person name="Sulston J.E."/>
            <person name="Durbin R.M."/>
            <person name="Hubbard T."/>
            <person name="Wooster R."/>
            <person name="Dunham I."/>
            <person name="Carter N.P."/>
            <person name="McVean G."/>
            <person name="Ross M.T."/>
            <person name="Harrow J."/>
            <person name="Olson M.V."/>
            <person name="Beck S."/>
            <person name="Rogers J."/>
            <person name="Bentley D.R."/>
        </authorList>
    </citation>
    <scope>NUCLEOTIDE SEQUENCE [LARGE SCALE GENOMIC DNA]</scope>
</reference>
<reference key="4">
    <citation type="journal article" date="2004" name="Genome Res.">
        <title>The status, quality, and expansion of the NIH full-length cDNA project: the Mammalian Gene Collection (MGC).</title>
        <authorList>
            <consortium name="The MGC Project Team"/>
        </authorList>
    </citation>
    <scope>NUCLEOTIDE SEQUENCE [LARGE SCALE MRNA] (ISOFORM 1)</scope>
    <source>
        <tissue>Colon</tissue>
        <tissue>Eye</tissue>
    </source>
</reference>
<reference key="5">
    <citation type="journal article" date="2008" name="Proc. Natl. Acad. Sci. U.S.A.">
        <title>A quantitative atlas of mitotic phosphorylation.</title>
        <authorList>
            <person name="Dephoure N."/>
            <person name="Zhou C."/>
            <person name="Villen J."/>
            <person name="Beausoleil S.A."/>
            <person name="Bakalarski C.E."/>
            <person name="Elledge S.J."/>
            <person name="Gygi S.P."/>
        </authorList>
    </citation>
    <scope>IDENTIFICATION BY MASS SPECTROMETRY [LARGE SCALE ANALYSIS]</scope>
    <source>
        <tissue>Cervix carcinoma</tissue>
    </source>
</reference>
<reference key="6">
    <citation type="journal article" date="2011" name="BMC Syst. Biol.">
        <title>Initial characterization of the human central proteome.</title>
        <authorList>
            <person name="Burkard T.R."/>
            <person name="Planyavsky M."/>
            <person name="Kaupe I."/>
            <person name="Breitwieser F.P."/>
            <person name="Buerckstuemmer T."/>
            <person name="Bennett K.L."/>
            <person name="Superti-Furga G."/>
            <person name="Colinge J."/>
        </authorList>
    </citation>
    <scope>IDENTIFICATION BY MASS SPECTROMETRY [LARGE SCALE ANALYSIS]</scope>
</reference>
<reference key="7">
    <citation type="journal article" date="2013" name="J. Proteome Res.">
        <title>Toward a comprehensive characterization of a human cancer cell phosphoproteome.</title>
        <authorList>
            <person name="Zhou H."/>
            <person name="Di Palma S."/>
            <person name="Preisinger C."/>
            <person name="Peng M."/>
            <person name="Polat A.N."/>
            <person name="Heck A.J."/>
            <person name="Mohammed S."/>
        </authorList>
    </citation>
    <scope>PHOSPHORYLATION [LARGE SCALE ANALYSIS] AT SER-181</scope>
    <scope>IDENTIFICATION BY MASS SPECTROMETRY [LARGE SCALE ANALYSIS]</scope>
    <source>
        <tissue>Cervix carcinoma</tissue>
        <tissue>Erythroleukemia</tissue>
    </source>
</reference>
<reference key="8">
    <citation type="journal article" date="2014" name="J. Proteomics">
        <title>An enzyme assisted RP-RPLC approach for in-depth analysis of human liver phosphoproteome.</title>
        <authorList>
            <person name="Bian Y."/>
            <person name="Song C."/>
            <person name="Cheng K."/>
            <person name="Dong M."/>
            <person name="Wang F."/>
            <person name="Huang J."/>
            <person name="Sun D."/>
            <person name="Wang L."/>
            <person name="Ye M."/>
            <person name="Zou H."/>
        </authorList>
    </citation>
    <scope>IDENTIFICATION BY MASS SPECTROMETRY [LARGE SCALE ANALYSIS]</scope>
    <source>
        <tissue>Liver</tissue>
    </source>
</reference>
<reference key="9">
    <citation type="journal article" date="2015" name="Proteomics">
        <title>N-terminome analysis of the human mitochondrial proteome.</title>
        <authorList>
            <person name="Vaca Jacome A.S."/>
            <person name="Rabilloud T."/>
            <person name="Schaeffer-Reiss C."/>
            <person name="Rompais M."/>
            <person name="Ayoub D."/>
            <person name="Lane L."/>
            <person name="Bairoch A."/>
            <person name="Van Dorsselaer A."/>
            <person name="Carapito C."/>
        </authorList>
    </citation>
    <scope>IDENTIFICATION BY MASS SPECTROMETRY [LARGE SCALE ANALYSIS]</scope>
</reference>
<sequence>MEESGYESVLCVKPDVHVYRIPPRATNRGYRAAEWQLDQPSWSGRLRITAKGQMAYIKLEDRTSGELFAQAPVDQFPGTAVESVTDSSRYFVIRIEDGNGRRAFIGIGFGDRGDAFDFNVALQDHFKWVKQQCEFAKQAQNPDQGPKLDLGFKEGQTIKLNIANMKKKEGAAGNPRVRPASTGGLSLLPPPPGGKTSTLIPPPGEQLAVGGSLVQPAVAPSSGGAPVPWPQPNPATADIWGDFTKSTGSTSSQTQPGTGWVQF</sequence>
<gene>
    <name type="primary">NECAP2</name>
</gene>
<feature type="chain" id="PRO_0000213071" description="Adaptin ear-binding coat-associated protein 2">
    <location>
        <begin position="1"/>
        <end position="263"/>
    </location>
</feature>
<feature type="region of interest" description="Disordered" evidence="2">
    <location>
        <begin position="166"/>
        <end position="194"/>
    </location>
</feature>
<feature type="region of interest" description="Disordered" evidence="2">
    <location>
        <begin position="219"/>
        <end position="263"/>
    </location>
</feature>
<feature type="short sequence motif" description="WXXF motif 1">
    <location>
        <begin position="240"/>
        <end position="243"/>
    </location>
</feature>
<feature type="short sequence motif" description="WXXF motif 2">
    <location>
        <begin position="260"/>
        <end position="263"/>
    </location>
</feature>
<feature type="compositionally biased region" description="Low complexity" evidence="2">
    <location>
        <begin position="246"/>
        <end position="263"/>
    </location>
</feature>
<feature type="modified residue" description="Phosphoserine" evidence="6">
    <location>
        <position position="181"/>
    </location>
</feature>
<feature type="splice variant" id="VSP_041726" description="In isoform 4." evidence="4">
    <location>
        <begin position="6"/>
        <end position="31"/>
    </location>
</feature>
<feature type="splice variant" id="VSP_013234" description="In isoform 3." evidence="3">
    <original>NMKKKEGAA</original>
    <variation>VSSTLAWLW</variation>
    <location>
        <begin position="164"/>
        <end position="172"/>
    </location>
</feature>
<feature type="splice variant" id="VSP_013235" description="In isoform 3." evidence="3">
    <location>
        <begin position="173"/>
        <end position="263"/>
    </location>
</feature>
<feature type="splice variant" id="VSP_013236" description="In isoform 2." evidence="4">
    <original>GGAPVPWPQPNPATADIWGDFTKSTGSTSSQTQPGTGWVQF</original>
    <variation>DQLPARPSQAQAGSSSDLSTVFPHVTSGKALPHLGQRKEDEALLSWPVFGA</variation>
    <location>
        <begin position="223"/>
        <end position="263"/>
    </location>
</feature>
<feature type="sequence variant" id="VAR_034154" description="In dbSNP:rs35056694.">
    <original>D</original>
    <variation>A</variation>
    <location>
        <position position="149"/>
    </location>
</feature>
<feature type="sequence conflict" description="In Ref. 2; BAG63581." evidence="5" ref="2">
    <original>P</original>
    <variation>S</variation>
    <location>
        <position position="192"/>
    </location>
</feature>
<name>NECP2_HUMAN</name>